<proteinExistence type="evidence at protein level"/>
<dbReference type="EMBL" id="BX284603">
    <property type="protein sequence ID" value="CAA79562.1"/>
    <property type="molecule type" value="Genomic_DNA"/>
</dbReference>
<dbReference type="EMBL" id="Z22177">
    <property type="protein sequence ID" value="CAA79562.1"/>
    <property type="status" value="JOINED"/>
    <property type="molecule type" value="Genomic_DNA"/>
</dbReference>
<dbReference type="PIR" id="E88549">
    <property type="entry name" value="E88549"/>
</dbReference>
<dbReference type="PIR" id="S28275">
    <property type="entry name" value="S28275"/>
</dbReference>
<dbReference type="RefSeq" id="NP_499028.1">
    <property type="nucleotide sequence ID" value="NM_066627.7"/>
</dbReference>
<dbReference type="SMR" id="Q03601"/>
<dbReference type="BioGRID" id="41494">
    <property type="interactions" value="20"/>
</dbReference>
<dbReference type="DIP" id="DIP-26359N"/>
<dbReference type="FunCoup" id="Q03601">
    <property type="interactions" value="13"/>
</dbReference>
<dbReference type="IntAct" id="Q03601">
    <property type="interactions" value="14"/>
</dbReference>
<dbReference type="STRING" id="6239.F54G8.4a.1"/>
<dbReference type="iPTMnet" id="Q03601"/>
<dbReference type="PaxDb" id="6239-F54G8.4"/>
<dbReference type="PeptideAtlas" id="Q03601"/>
<dbReference type="EnsemblMetazoa" id="F54G8.4a.1">
    <property type="protein sequence ID" value="F54G8.4a.1"/>
    <property type="gene ID" value="WBGene00003597"/>
</dbReference>
<dbReference type="GeneID" id="176295"/>
<dbReference type="KEGG" id="cel:CELE_F54G8.4"/>
<dbReference type="UCSC" id="F54G8.4">
    <property type="organism name" value="c. elegans"/>
</dbReference>
<dbReference type="AGR" id="WB:WBGene00003597"/>
<dbReference type="CTD" id="176295"/>
<dbReference type="WormBase" id="F54G8.4a">
    <property type="protein sequence ID" value="CE05942"/>
    <property type="gene ID" value="WBGene00003597"/>
    <property type="gene designation" value="nhl-1"/>
</dbReference>
<dbReference type="eggNOG" id="KOG2177">
    <property type="taxonomic scope" value="Eukaryota"/>
</dbReference>
<dbReference type="GeneTree" id="ENSGT00940000168201"/>
<dbReference type="HOGENOM" id="CLU_002505_1_0_1"/>
<dbReference type="InParanoid" id="Q03601"/>
<dbReference type="OMA" id="EEYIHRY"/>
<dbReference type="OrthoDB" id="342730at2759"/>
<dbReference type="PhylomeDB" id="Q03601"/>
<dbReference type="Reactome" id="R-CEL-6798695">
    <property type="pathway name" value="Neutrophil degranulation"/>
</dbReference>
<dbReference type="SignaLink" id="Q03601"/>
<dbReference type="PRO" id="PR:Q03601"/>
<dbReference type="Proteomes" id="UP000001940">
    <property type="component" value="Chromosome III"/>
</dbReference>
<dbReference type="Bgee" id="WBGene00003597">
    <property type="expression patterns" value="Expressed in pharyngeal muscle cell (C elegans) and 3 other cell types or tissues"/>
</dbReference>
<dbReference type="ExpressionAtlas" id="Q03601">
    <property type="expression patterns" value="baseline and differential"/>
</dbReference>
<dbReference type="GO" id="GO:0061630">
    <property type="term" value="F:ubiquitin protein ligase activity"/>
    <property type="evidence" value="ECO:0000318"/>
    <property type="project" value="GO_Central"/>
</dbReference>
<dbReference type="GO" id="GO:0004842">
    <property type="term" value="F:ubiquitin-protein transferase activity"/>
    <property type="evidence" value="ECO:0000314"/>
    <property type="project" value="WormBase"/>
</dbReference>
<dbReference type="GO" id="GO:0008270">
    <property type="term" value="F:zinc ion binding"/>
    <property type="evidence" value="ECO:0007669"/>
    <property type="project" value="UniProtKB-KW"/>
</dbReference>
<dbReference type="GO" id="GO:0043161">
    <property type="term" value="P:proteasome-mediated ubiquitin-dependent protein catabolic process"/>
    <property type="evidence" value="ECO:0000318"/>
    <property type="project" value="GO_Central"/>
</dbReference>
<dbReference type="GO" id="GO:0000209">
    <property type="term" value="P:protein polyubiquitination"/>
    <property type="evidence" value="ECO:0000318"/>
    <property type="project" value="GO_Central"/>
</dbReference>
<dbReference type="GO" id="GO:0016567">
    <property type="term" value="P:protein ubiquitination"/>
    <property type="evidence" value="ECO:0000314"/>
    <property type="project" value="WormBase"/>
</dbReference>
<dbReference type="CDD" id="cd14954">
    <property type="entry name" value="NHL_TRIM71_like"/>
    <property type="match status" value="1"/>
</dbReference>
<dbReference type="CDD" id="cd16524">
    <property type="entry name" value="RING-HC_NHL-1-like"/>
    <property type="match status" value="1"/>
</dbReference>
<dbReference type="FunFam" id="2.120.10.30:FF:000013">
    <property type="entry name" value="E3 ubiquitin-protein ligase TRIM71"/>
    <property type="match status" value="2"/>
</dbReference>
<dbReference type="FunFam" id="2.120.10.30:FF:000037">
    <property type="entry name" value="Uncharacterized protein, isoform E"/>
    <property type="match status" value="1"/>
</dbReference>
<dbReference type="Gene3D" id="2.120.10.30">
    <property type="entry name" value="TolB, C-terminal domain"/>
    <property type="match status" value="3"/>
</dbReference>
<dbReference type="Gene3D" id="3.30.40.10">
    <property type="entry name" value="Zinc/RING finger domain, C3HC4 (zinc finger)"/>
    <property type="match status" value="1"/>
</dbReference>
<dbReference type="InterPro" id="IPR011042">
    <property type="entry name" value="6-blade_b-propeller_TolB-like"/>
</dbReference>
<dbReference type="InterPro" id="IPR001258">
    <property type="entry name" value="NHL_repeat"/>
</dbReference>
<dbReference type="InterPro" id="IPR050952">
    <property type="entry name" value="TRIM-NHL_E3_ligases"/>
</dbReference>
<dbReference type="InterPro" id="IPR018957">
    <property type="entry name" value="Znf_C3HC4_RING-type"/>
</dbReference>
<dbReference type="InterPro" id="IPR001841">
    <property type="entry name" value="Znf_RING"/>
</dbReference>
<dbReference type="InterPro" id="IPR013083">
    <property type="entry name" value="Znf_RING/FYVE/PHD"/>
</dbReference>
<dbReference type="InterPro" id="IPR017907">
    <property type="entry name" value="Znf_RING_CS"/>
</dbReference>
<dbReference type="PANTHER" id="PTHR24104:SF47">
    <property type="entry name" value="E3 UBIQUITIN-PROTEIN LIGASE NHLRC1"/>
    <property type="match status" value="1"/>
</dbReference>
<dbReference type="PANTHER" id="PTHR24104">
    <property type="entry name" value="E3 UBIQUITIN-PROTEIN LIGASE NHLRC1-RELATED"/>
    <property type="match status" value="1"/>
</dbReference>
<dbReference type="Pfam" id="PF01436">
    <property type="entry name" value="NHL"/>
    <property type="match status" value="6"/>
</dbReference>
<dbReference type="Pfam" id="PF00097">
    <property type="entry name" value="zf-C3HC4"/>
    <property type="match status" value="1"/>
</dbReference>
<dbReference type="SMART" id="SM00184">
    <property type="entry name" value="RING"/>
    <property type="match status" value="1"/>
</dbReference>
<dbReference type="SUPFAM" id="SSF101898">
    <property type="entry name" value="NHL repeat"/>
    <property type="match status" value="1"/>
</dbReference>
<dbReference type="SUPFAM" id="SSF57850">
    <property type="entry name" value="RING/U-box"/>
    <property type="match status" value="1"/>
</dbReference>
<dbReference type="PROSITE" id="PS51125">
    <property type="entry name" value="NHL"/>
    <property type="match status" value="6"/>
</dbReference>
<dbReference type="PROSITE" id="PS00518">
    <property type="entry name" value="ZF_RING_1"/>
    <property type="match status" value="1"/>
</dbReference>
<dbReference type="PROSITE" id="PS50089">
    <property type="entry name" value="ZF_RING_2"/>
    <property type="match status" value="1"/>
</dbReference>
<evidence type="ECO:0000255" key="1">
    <source>
        <dbReference type="PROSITE-ProRule" id="PRU00175"/>
    </source>
</evidence>
<evidence type="ECO:0000256" key="2">
    <source>
        <dbReference type="SAM" id="MobiDB-lite"/>
    </source>
</evidence>
<evidence type="ECO:0000269" key="3">
    <source>
    </source>
</evidence>
<evidence type="ECO:0000269" key="4">
    <source>
    </source>
</evidence>
<evidence type="ECO:0000312" key="5">
    <source>
        <dbReference type="WormBase" id="F54G8.4a"/>
    </source>
</evidence>
<accession>Q03601</accession>
<accession>Q23510</accession>
<protein>
    <recommendedName>
        <fullName>RING finger protein nhl-1</fullName>
    </recommendedName>
</protein>
<sequence length="974" mass="109138">MSSSPQNEAEAREKMRELMSRPPSSRPADFVNPLEKIEQLLTCPICLDRYKQPKLLPCQHTFCYPCLESCADTLHRNLKCPECRAEHNIPYDGVKAFQPNYTLTGFLEIHLQATPESAAEIEEYIHRYNLERCKICDEKADCEPCAHCDRKACKECRQTHMDMLKRDMSRLLNQVKRLANRITEASDNLSKGVDMMTMNCETTKAEIKEYFHRYQRDLKKKEDNFLMEVDTFQATETRNMSNLRDVLEIESSNMSEAVSRLDAAIKGECSIEDSELVRMKNTFTEGLEYLRNFQPDADELFNRKLRFSAGDDAAKLPAAITTSGELCVLVPQFSGRYLPLEQSYLPRPFRLPLESDSYRVKSDERASMRDREADRTSSRHSHRNPEPDESSIRYRRRQQLEDEAWNRLRNSSAAPSLLTTSVTADSSSRTSPWAADRVTRSVEPTKSRPTSLIVPNTETPRTVSPASKPPLPPQSVERVERTEDASPAPLPQLPIRKPPLPRQQSSNDDSLNEKVETIRRAHQQRQDASRAASRAVSSEESEGEDFPVSTNRGRIRIVCRAASVNRDDGLMSMIPGTGTIINVPPPQHQLPASAPITNGTSEQVAIPVTHFTGEEDESDIVVPAWLQRRRQRFQRSRTNPDIQAQFTSARVQQLLAERQSRLDSSTTTDEEKEKLAVLRQRGRSASREAGEWRARGRPRAVFGRKGAKDGELNWPRGICALSGGLVATCDSSNHRVCVFDKDGKFVRQFGGYGAGAGQLDSAAGLASSKLRVIVSDRYNHRISVFGLEGDHLFSFGGHGQGNAKFNNPWGVAVDDLGSIYVADKDNHRVQVFDKNGQFIAKFGSFGHLPGQLNSPLFIAVSRVTHHVYVSDSSNHRISVFDPHGVHLFSFGEEGFHGGQFKFPRGIAIDSQENLIIADSGNNRIQVFDAQGQFVSSFGTWGGGAGQLKGVEDVCVTADGSIVVTDRENHRIQIF</sequence>
<gene>
    <name evidence="5" type="primary">nhl-1</name>
    <name evidence="5" type="ORF">F54G8.4</name>
</gene>
<comment type="subunit">
    <text evidence="3">Interacts with ubc-13.</text>
</comment>
<comment type="interaction">
    <interactant intactId="EBI-314158">
        <id>Q03601</id>
    </interactant>
    <interactant intactId="EBI-314119">
        <id>G5EFS1</id>
        <label>ikb-1</label>
    </interactant>
    <organismsDiffer>false</organismsDiffer>
    <experiments>5</experiments>
</comment>
<comment type="interaction">
    <interactant intactId="EBI-314158">
        <id>Q03601</id>
    </interactant>
    <interactant intactId="EBI-325337">
        <id>G5EC32</id>
        <label>sorb-1</label>
    </interactant>
    <organismsDiffer>false</organismsDiffer>
    <experiments>7</experiments>
</comment>
<comment type="disruption phenotype">
    <text evidence="4">Double knockout with par-2 mutant (it5ts) partially suppresses the lethality phenotype of the par-2 mutant (it5ts) at 25 degrees Celsius.</text>
</comment>
<feature type="chain" id="PRO_0000055983" description="RING finger protein nhl-1">
    <location>
        <begin position="1"/>
        <end position="974"/>
    </location>
</feature>
<feature type="repeat" description="NHL 1">
    <location>
        <begin position="699"/>
        <end position="742"/>
    </location>
</feature>
<feature type="repeat" description="NHL 2">
    <location>
        <begin position="746"/>
        <end position="788"/>
    </location>
</feature>
<feature type="repeat" description="NHL 3">
    <location>
        <begin position="792"/>
        <end position="835"/>
    </location>
</feature>
<feature type="repeat" description="NHL 4">
    <location>
        <begin position="839"/>
        <end position="883"/>
    </location>
</feature>
<feature type="repeat" description="NHL 5">
    <location>
        <begin position="887"/>
        <end position="930"/>
    </location>
</feature>
<feature type="repeat" description="NHL 6">
    <location>
        <begin position="934"/>
        <end position="974"/>
    </location>
</feature>
<feature type="zinc finger region" description="RING-type" evidence="1">
    <location>
        <begin position="43"/>
        <end position="84"/>
    </location>
</feature>
<feature type="region of interest" description="Disordered" evidence="2">
    <location>
        <begin position="1"/>
        <end position="29"/>
    </location>
</feature>
<feature type="region of interest" description="Disordered" evidence="2">
    <location>
        <begin position="360"/>
        <end position="395"/>
    </location>
</feature>
<feature type="region of interest" description="Disordered" evidence="2">
    <location>
        <begin position="416"/>
        <end position="548"/>
    </location>
</feature>
<feature type="compositionally biased region" description="Basic and acidic residues" evidence="2">
    <location>
        <begin position="9"/>
        <end position="19"/>
    </location>
</feature>
<feature type="compositionally biased region" description="Polar residues" evidence="2">
    <location>
        <begin position="416"/>
        <end position="431"/>
    </location>
</feature>
<feature type="compositionally biased region" description="Basic and acidic residues" evidence="2">
    <location>
        <begin position="437"/>
        <end position="446"/>
    </location>
</feature>
<feature type="compositionally biased region" description="Polar residues" evidence="2">
    <location>
        <begin position="447"/>
        <end position="465"/>
    </location>
</feature>
<feature type="compositionally biased region" description="Pro residues" evidence="2">
    <location>
        <begin position="488"/>
        <end position="501"/>
    </location>
</feature>
<feature type="compositionally biased region" description="Basic and acidic residues" evidence="2">
    <location>
        <begin position="511"/>
        <end position="528"/>
    </location>
</feature>
<feature type="compositionally biased region" description="Low complexity" evidence="2">
    <location>
        <begin position="529"/>
        <end position="538"/>
    </location>
</feature>
<reference key="1">
    <citation type="journal article" date="1994" name="Nature">
        <title>2.2 Mb of contiguous nucleotide sequence from chromosome III of C. elegans.</title>
        <authorList>
            <person name="Wilson R."/>
            <person name="Ainscough R."/>
            <person name="Anderson K."/>
            <person name="Baynes C."/>
            <person name="Berks M."/>
            <person name="Bonfield J."/>
            <person name="Burton J."/>
            <person name="Connell M."/>
            <person name="Copsey T."/>
            <person name="Cooper J."/>
            <person name="Coulson A."/>
            <person name="Craxton M."/>
            <person name="Dear S."/>
            <person name="Du Z."/>
            <person name="Durbin R."/>
            <person name="Favello A."/>
            <person name="Fraser A."/>
            <person name="Fulton L."/>
            <person name="Gardner A."/>
            <person name="Green P."/>
            <person name="Hawkins T."/>
            <person name="Hillier L."/>
            <person name="Jier M."/>
            <person name="Johnston L."/>
            <person name="Jones M."/>
            <person name="Kershaw J."/>
            <person name="Kirsten J."/>
            <person name="Laisster N."/>
            <person name="Latreille P."/>
            <person name="Lightning J."/>
            <person name="Lloyd C."/>
            <person name="Mortimore B."/>
            <person name="O'Callaghan M."/>
            <person name="Parsons J."/>
            <person name="Percy C."/>
            <person name="Rifken L."/>
            <person name="Roopra A."/>
            <person name="Saunders D."/>
            <person name="Shownkeen R."/>
            <person name="Sims M."/>
            <person name="Smaldon N."/>
            <person name="Smith A."/>
            <person name="Smith M."/>
            <person name="Sonnhammer E."/>
            <person name="Staden R."/>
            <person name="Sulston J."/>
            <person name="Thierry-Mieg J."/>
            <person name="Thomas K."/>
            <person name="Vaudin M."/>
            <person name="Vaughan K."/>
            <person name="Waterston R."/>
            <person name="Watson A."/>
            <person name="Weinstock L."/>
            <person name="Wilkinson-Sproat J."/>
            <person name="Wohldman P."/>
        </authorList>
    </citation>
    <scope>NUCLEOTIDE SEQUENCE [LARGE SCALE GENOMIC DNA]</scope>
    <source>
        <strain>Bristol N2</strain>
    </source>
</reference>
<reference key="2">
    <citation type="journal article" date="1998" name="Science">
        <title>Genome sequence of the nematode C. elegans: a platform for investigating biology.</title>
        <authorList>
            <consortium name="The C. elegans sequencing consortium"/>
        </authorList>
    </citation>
    <scope>NUCLEOTIDE SEQUENCE [LARGE SCALE GENOMIC DNA]</scope>
    <source>
        <strain>Bristol N2</strain>
    </source>
</reference>
<reference key="3">
    <citation type="journal article" date="2004" name="Biochem. Biophys. Res. Commun.">
        <title>Interactions within the ubiquitin pathway of Caenorhabditis elegans.</title>
        <authorList>
            <person name="Gudgen M."/>
            <person name="Chandrasekaran A."/>
            <person name="Frazier T."/>
            <person name="Boyd L."/>
        </authorList>
    </citation>
    <scope>INTERACTION WITH UBC-13</scope>
</reference>
<reference key="4">
    <citation type="journal article" date="2008" name="Dev. Biol.">
        <title>C. elegans Brat homologs regulate PAR protein-dependent polarity and asymmetric cell division.</title>
        <authorList>
            <person name="Hyenne V."/>
            <person name="Desrosiers M."/>
            <person name="Labbe J.C."/>
        </authorList>
    </citation>
    <scope>DISRUPTION PHENOTYPE</scope>
</reference>
<organism>
    <name type="scientific">Caenorhabditis elegans</name>
    <dbReference type="NCBI Taxonomy" id="6239"/>
    <lineage>
        <taxon>Eukaryota</taxon>
        <taxon>Metazoa</taxon>
        <taxon>Ecdysozoa</taxon>
        <taxon>Nematoda</taxon>
        <taxon>Chromadorea</taxon>
        <taxon>Rhabditida</taxon>
        <taxon>Rhabditina</taxon>
        <taxon>Rhabditomorpha</taxon>
        <taxon>Rhabditoidea</taxon>
        <taxon>Rhabditidae</taxon>
        <taxon>Peloderinae</taxon>
        <taxon>Caenorhabditis</taxon>
    </lineage>
</organism>
<keyword id="KW-0479">Metal-binding</keyword>
<keyword id="KW-1185">Reference proteome</keyword>
<keyword id="KW-0677">Repeat</keyword>
<keyword id="KW-0862">Zinc</keyword>
<keyword id="KW-0863">Zinc-finger</keyword>
<name>NHL1_CAEEL</name>